<proteinExistence type="inferred from homology"/>
<accession>B8CIX6</accession>
<reference key="1">
    <citation type="journal article" date="2008" name="PLoS ONE">
        <title>Environmental adaptation: genomic analysis of the piezotolerant and psychrotolerant deep-sea iron reducing bacterium Shewanella piezotolerans WP3.</title>
        <authorList>
            <person name="Wang F."/>
            <person name="Wang J."/>
            <person name="Jian H."/>
            <person name="Zhang B."/>
            <person name="Li S."/>
            <person name="Wang F."/>
            <person name="Zeng X."/>
            <person name="Gao L."/>
            <person name="Bartlett D.H."/>
            <person name="Yu J."/>
            <person name="Hu S."/>
            <person name="Xiao X."/>
        </authorList>
    </citation>
    <scope>NUCLEOTIDE SEQUENCE [LARGE SCALE GENOMIC DNA]</scope>
    <source>
        <strain>WP3 / JCM 13877</strain>
    </source>
</reference>
<dbReference type="EMBL" id="CP000472">
    <property type="protein sequence ID" value="ACJ27602.1"/>
    <property type="molecule type" value="Genomic_DNA"/>
</dbReference>
<dbReference type="RefSeq" id="WP_020910981.1">
    <property type="nucleotide sequence ID" value="NC_011566.1"/>
</dbReference>
<dbReference type="SMR" id="B8CIX6"/>
<dbReference type="STRING" id="225849.swp_0789"/>
<dbReference type="KEGG" id="swp:swp_0789"/>
<dbReference type="eggNOG" id="COG1923">
    <property type="taxonomic scope" value="Bacteria"/>
</dbReference>
<dbReference type="HOGENOM" id="CLU_113688_2_2_6"/>
<dbReference type="OrthoDB" id="9799751at2"/>
<dbReference type="Proteomes" id="UP000000753">
    <property type="component" value="Chromosome"/>
</dbReference>
<dbReference type="GO" id="GO:0005829">
    <property type="term" value="C:cytosol"/>
    <property type="evidence" value="ECO:0007669"/>
    <property type="project" value="TreeGrafter"/>
</dbReference>
<dbReference type="GO" id="GO:0003723">
    <property type="term" value="F:RNA binding"/>
    <property type="evidence" value="ECO:0007669"/>
    <property type="project" value="UniProtKB-UniRule"/>
</dbReference>
<dbReference type="GO" id="GO:0006355">
    <property type="term" value="P:regulation of DNA-templated transcription"/>
    <property type="evidence" value="ECO:0007669"/>
    <property type="project" value="InterPro"/>
</dbReference>
<dbReference type="GO" id="GO:0043487">
    <property type="term" value="P:regulation of RNA stability"/>
    <property type="evidence" value="ECO:0007669"/>
    <property type="project" value="TreeGrafter"/>
</dbReference>
<dbReference type="GO" id="GO:0045974">
    <property type="term" value="P:regulation of translation, ncRNA-mediated"/>
    <property type="evidence" value="ECO:0007669"/>
    <property type="project" value="TreeGrafter"/>
</dbReference>
<dbReference type="CDD" id="cd01716">
    <property type="entry name" value="Hfq"/>
    <property type="match status" value="1"/>
</dbReference>
<dbReference type="FunFam" id="2.30.30.100:FF:000001">
    <property type="entry name" value="RNA-binding protein Hfq"/>
    <property type="match status" value="1"/>
</dbReference>
<dbReference type="Gene3D" id="2.30.30.100">
    <property type="match status" value="1"/>
</dbReference>
<dbReference type="HAMAP" id="MF_00436">
    <property type="entry name" value="Hfq"/>
    <property type="match status" value="1"/>
</dbReference>
<dbReference type="InterPro" id="IPR005001">
    <property type="entry name" value="Hfq"/>
</dbReference>
<dbReference type="InterPro" id="IPR010920">
    <property type="entry name" value="LSM_dom_sf"/>
</dbReference>
<dbReference type="InterPro" id="IPR047575">
    <property type="entry name" value="Sm"/>
</dbReference>
<dbReference type="NCBIfam" id="TIGR02383">
    <property type="entry name" value="Hfq"/>
    <property type="match status" value="1"/>
</dbReference>
<dbReference type="NCBIfam" id="NF001602">
    <property type="entry name" value="PRK00395.1"/>
    <property type="match status" value="1"/>
</dbReference>
<dbReference type="PANTHER" id="PTHR34772">
    <property type="entry name" value="RNA-BINDING PROTEIN HFQ"/>
    <property type="match status" value="1"/>
</dbReference>
<dbReference type="PANTHER" id="PTHR34772:SF1">
    <property type="entry name" value="RNA-BINDING PROTEIN HFQ"/>
    <property type="match status" value="1"/>
</dbReference>
<dbReference type="Pfam" id="PF17209">
    <property type="entry name" value="Hfq"/>
    <property type="match status" value="1"/>
</dbReference>
<dbReference type="SUPFAM" id="SSF50182">
    <property type="entry name" value="Sm-like ribonucleoproteins"/>
    <property type="match status" value="1"/>
</dbReference>
<dbReference type="PROSITE" id="PS52002">
    <property type="entry name" value="SM"/>
    <property type="match status" value="1"/>
</dbReference>
<comment type="function">
    <text evidence="1">RNA chaperone that binds small regulatory RNA (sRNAs) and mRNAs to facilitate mRNA translational regulation in response to envelope stress, environmental stress and changes in metabolite concentrations. Also binds with high specificity to tRNAs.</text>
</comment>
<comment type="subunit">
    <text evidence="1">Homohexamer.</text>
</comment>
<comment type="similarity">
    <text evidence="1">Belongs to the Hfq family.</text>
</comment>
<evidence type="ECO:0000255" key="1">
    <source>
        <dbReference type="HAMAP-Rule" id="MF_00436"/>
    </source>
</evidence>
<evidence type="ECO:0000255" key="2">
    <source>
        <dbReference type="PROSITE-ProRule" id="PRU01346"/>
    </source>
</evidence>
<keyword id="KW-0694">RNA-binding</keyword>
<keyword id="KW-0346">Stress response</keyword>
<protein>
    <recommendedName>
        <fullName evidence="1">RNA-binding protein Hfq</fullName>
    </recommendedName>
</protein>
<name>HFQ_SHEPW</name>
<feature type="chain" id="PRO_1000190359" description="RNA-binding protein Hfq">
    <location>
        <begin position="1"/>
        <end position="92"/>
    </location>
</feature>
<feature type="domain" description="Sm" evidence="2">
    <location>
        <begin position="9"/>
        <end position="68"/>
    </location>
</feature>
<sequence length="92" mass="10329">MAKGQSLQDPFLNALRRERVPVSIYLVNGIKLQGQVESFDQFVILLKNTVSQMVYKHAISTVVPSRPFNVSNHQATNAQAGYNAQHDETDEK</sequence>
<gene>
    <name evidence="1" type="primary">hfq</name>
    <name type="ordered locus">swp_0789</name>
</gene>
<organism>
    <name type="scientific">Shewanella piezotolerans (strain WP3 / JCM 13877)</name>
    <dbReference type="NCBI Taxonomy" id="225849"/>
    <lineage>
        <taxon>Bacteria</taxon>
        <taxon>Pseudomonadati</taxon>
        <taxon>Pseudomonadota</taxon>
        <taxon>Gammaproteobacteria</taxon>
        <taxon>Alteromonadales</taxon>
        <taxon>Shewanellaceae</taxon>
        <taxon>Shewanella</taxon>
    </lineage>
</organism>